<keyword id="KW-1185">Reference proteome</keyword>
<keyword id="KW-0687">Ribonucleoprotein</keyword>
<keyword id="KW-0689">Ribosomal protein</keyword>
<keyword id="KW-0694">RNA-binding</keyword>
<keyword id="KW-0699">rRNA-binding</keyword>
<comment type="function">
    <text evidence="1">Binds directly to 23S ribosomal RNA and is necessary for the in vitro assembly process of the 50S ribosomal subunit. It is not involved in the protein synthesizing functions of that subunit.</text>
</comment>
<comment type="similarity">
    <text evidence="1">Belongs to the bacterial ribosomal protein bL20 family.</text>
</comment>
<proteinExistence type="inferred from homology"/>
<name>RL20_COXBU</name>
<gene>
    <name evidence="1" type="primary">rplT</name>
    <name type="ordered locus">CBU_1323</name>
</gene>
<protein>
    <recommendedName>
        <fullName evidence="1">Large ribosomal subunit protein bL20</fullName>
    </recommendedName>
    <alternativeName>
        <fullName evidence="2">50S ribosomal protein L20</fullName>
    </alternativeName>
</protein>
<reference key="1">
    <citation type="journal article" date="2003" name="Proc. Natl. Acad. Sci. U.S.A.">
        <title>Complete genome sequence of the Q-fever pathogen, Coxiella burnetii.</title>
        <authorList>
            <person name="Seshadri R."/>
            <person name="Paulsen I.T."/>
            <person name="Eisen J.A."/>
            <person name="Read T.D."/>
            <person name="Nelson K.E."/>
            <person name="Nelson W.C."/>
            <person name="Ward N.L."/>
            <person name="Tettelin H."/>
            <person name="Davidsen T.M."/>
            <person name="Beanan M.J."/>
            <person name="DeBoy R.T."/>
            <person name="Daugherty S.C."/>
            <person name="Brinkac L.M."/>
            <person name="Madupu R."/>
            <person name="Dodson R.J."/>
            <person name="Khouri H.M."/>
            <person name="Lee K.H."/>
            <person name="Carty H.A."/>
            <person name="Scanlan D."/>
            <person name="Heinzen R.A."/>
            <person name="Thompson H.A."/>
            <person name="Samuel J.E."/>
            <person name="Fraser C.M."/>
            <person name="Heidelberg J.F."/>
        </authorList>
    </citation>
    <scope>NUCLEOTIDE SEQUENCE [LARGE SCALE GENOMIC DNA]</scope>
    <source>
        <strain>RSA 493 / Nine Mile phase I</strain>
    </source>
</reference>
<dbReference type="EMBL" id="AE016828">
    <property type="protein sequence ID" value="AAO90827.1"/>
    <property type="molecule type" value="Genomic_DNA"/>
</dbReference>
<dbReference type="RefSeq" id="NP_820313.1">
    <property type="nucleotide sequence ID" value="NC_002971.4"/>
</dbReference>
<dbReference type="RefSeq" id="WP_005770935.1">
    <property type="nucleotide sequence ID" value="NZ_CDBG01000001.1"/>
</dbReference>
<dbReference type="SMR" id="Q83C13"/>
<dbReference type="STRING" id="227377.CBU_1323"/>
<dbReference type="DNASU" id="1209229"/>
<dbReference type="EnsemblBacteria" id="AAO90827">
    <property type="protein sequence ID" value="AAO90827"/>
    <property type="gene ID" value="CBU_1323"/>
</dbReference>
<dbReference type="GeneID" id="1209229"/>
<dbReference type="KEGG" id="cbu:CBU_1323"/>
<dbReference type="PATRIC" id="fig|227377.7.peg.1314"/>
<dbReference type="eggNOG" id="COG0292">
    <property type="taxonomic scope" value="Bacteria"/>
</dbReference>
<dbReference type="HOGENOM" id="CLU_123265_0_1_6"/>
<dbReference type="OrthoDB" id="9808966at2"/>
<dbReference type="Proteomes" id="UP000002671">
    <property type="component" value="Chromosome"/>
</dbReference>
<dbReference type="GO" id="GO:0022625">
    <property type="term" value="C:cytosolic large ribosomal subunit"/>
    <property type="evidence" value="ECO:0000318"/>
    <property type="project" value="GO_Central"/>
</dbReference>
<dbReference type="GO" id="GO:0019843">
    <property type="term" value="F:rRNA binding"/>
    <property type="evidence" value="ECO:0007669"/>
    <property type="project" value="UniProtKB-UniRule"/>
</dbReference>
<dbReference type="GO" id="GO:0003735">
    <property type="term" value="F:structural constituent of ribosome"/>
    <property type="evidence" value="ECO:0000318"/>
    <property type="project" value="GO_Central"/>
</dbReference>
<dbReference type="GO" id="GO:0000027">
    <property type="term" value="P:ribosomal large subunit assembly"/>
    <property type="evidence" value="ECO:0007669"/>
    <property type="project" value="UniProtKB-UniRule"/>
</dbReference>
<dbReference type="GO" id="GO:0006412">
    <property type="term" value="P:translation"/>
    <property type="evidence" value="ECO:0007669"/>
    <property type="project" value="InterPro"/>
</dbReference>
<dbReference type="CDD" id="cd07026">
    <property type="entry name" value="Ribosomal_L20"/>
    <property type="match status" value="1"/>
</dbReference>
<dbReference type="FunFam" id="1.10.1900.20:FF:000001">
    <property type="entry name" value="50S ribosomal protein L20"/>
    <property type="match status" value="1"/>
</dbReference>
<dbReference type="Gene3D" id="6.10.160.10">
    <property type="match status" value="1"/>
</dbReference>
<dbReference type="Gene3D" id="1.10.1900.20">
    <property type="entry name" value="Ribosomal protein L20"/>
    <property type="match status" value="1"/>
</dbReference>
<dbReference type="HAMAP" id="MF_00382">
    <property type="entry name" value="Ribosomal_bL20"/>
    <property type="match status" value="1"/>
</dbReference>
<dbReference type="InterPro" id="IPR005813">
    <property type="entry name" value="Ribosomal_bL20"/>
</dbReference>
<dbReference type="InterPro" id="IPR049946">
    <property type="entry name" value="RIBOSOMAL_L20_CS"/>
</dbReference>
<dbReference type="InterPro" id="IPR035566">
    <property type="entry name" value="Ribosomal_protein_bL20_C"/>
</dbReference>
<dbReference type="NCBIfam" id="TIGR01032">
    <property type="entry name" value="rplT_bact"/>
    <property type="match status" value="1"/>
</dbReference>
<dbReference type="PANTHER" id="PTHR10986">
    <property type="entry name" value="39S RIBOSOMAL PROTEIN L20"/>
    <property type="match status" value="1"/>
</dbReference>
<dbReference type="Pfam" id="PF00453">
    <property type="entry name" value="Ribosomal_L20"/>
    <property type="match status" value="1"/>
</dbReference>
<dbReference type="PRINTS" id="PR00062">
    <property type="entry name" value="RIBOSOMALL20"/>
</dbReference>
<dbReference type="SUPFAM" id="SSF74731">
    <property type="entry name" value="Ribosomal protein L20"/>
    <property type="match status" value="1"/>
</dbReference>
<dbReference type="PROSITE" id="PS00937">
    <property type="entry name" value="RIBOSOMAL_L20"/>
    <property type="match status" value="1"/>
</dbReference>
<accession>Q83C13</accession>
<evidence type="ECO:0000255" key="1">
    <source>
        <dbReference type="HAMAP-Rule" id="MF_00382"/>
    </source>
</evidence>
<evidence type="ECO:0000305" key="2"/>
<feature type="chain" id="PRO_0000177152" description="Large ribosomal subunit protein bL20">
    <location>
        <begin position="1"/>
        <end position="119"/>
    </location>
</feature>
<organism>
    <name type="scientific">Coxiella burnetii (strain RSA 493 / Nine Mile phase I)</name>
    <dbReference type="NCBI Taxonomy" id="227377"/>
    <lineage>
        <taxon>Bacteria</taxon>
        <taxon>Pseudomonadati</taxon>
        <taxon>Pseudomonadota</taxon>
        <taxon>Gammaproteobacteria</taxon>
        <taxon>Legionellales</taxon>
        <taxon>Coxiellaceae</taxon>
        <taxon>Coxiella</taxon>
    </lineage>
</organism>
<sequence length="119" mass="13443">MPRVKRGVTARARHKKVLTKAKGYYGARSRVFRVAKQAVIKAAQYAYRDRKQRKRQFRALWIVRINAAAREHGLSYSRLINGLMKASVAIDRKNLAELAVYDKAAFGKLAEKAKQALGG</sequence>